<comment type="catalytic activity">
    <reaction evidence="1">
        <text>5-amino-1-(5-phospho-D-ribosyl)imidazole-4-carboxylate + L-aspartate + ATP = (2S)-2-[5-amino-1-(5-phospho-beta-D-ribosyl)imidazole-4-carboxamido]succinate + ADP + phosphate + 2 H(+)</text>
        <dbReference type="Rhea" id="RHEA:22628"/>
        <dbReference type="ChEBI" id="CHEBI:15378"/>
        <dbReference type="ChEBI" id="CHEBI:29991"/>
        <dbReference type="ChEBI" id="CHEBI:30616"/>
        <dbReference type="ChEBI" id="CHEBI:43474"/>
        <dbReference type="ChEBI" id="CHEBI:58443"/>
        <dbReference type="ChEBI" id="CHEBI:77657"/>
        <dbReference type="ChEBI" id="CHEBI:456216"/>
        <dbReference type="EC" id="6.3.2.6"/>
    </reaction>
</comment>
<comment type="pathway">
    <text evidence="1">Purine metabolism; IMP biosynthesis via de novo pathway; 5-amino-1-(5-phospho-D-ribosyl)imidazole-4-carboxamide from 5-amino-1-(5-phospho-D-ribosyl)imidazole-4-carboxylate: step 1/2.</text>
</comment>
<comment type="similarity">
    <text evidence="1">Belongs to the SAICAR synthetase family.</text>
</comment>
<feature type="chain" id="PRO_1000057886" description="Phosphoribosylaminoimidazole-succinocarboxamide synthase">
    <location>
        <begin position="1"/>
        <end position="237"/>
    </location>
</feature>
<reference key="1">
    <citation type="journal article" date="2010" name="PLoS Genet.">
        <title>Genome sequence of the plant growth promoting endophytic bacterium Enterobacter sp. 638.</title>
        <authorList>
            <person name="Taghavi S."/>
            <person name="van der Lelie D."/>
            <person name="Hoffman A."/>
            <person name="Zhang Y.B."/>
            <person name="Walla M.D."/>
            <person name="Vangronsveld J."/>
            <person name="Newman L."/>
            <person name="Monchy S."/>
        </authorList>
    </citation>
    <scope>NUCLEOTIDE SEQUENCE [LARGE SCALE GENOMIC DNA]</scope>
    <source>
        <strain>638</strain>
    </source>
</reference>
<accession>A4WD56</accession>
<gene>
    <name evidence="1" type="primary">purC</name>
    <name type="ordered locus">Ent638_2972</name>
</gene>
<evidence type="ECO:0000255" key="1">
    <source>
        <dbReference type="HAMAP-Rule" id="MF_00137"/>
    </source>
</evidence>
<name>PUR7_ENT38</name>
<protein>
    <recommendedName>
        <fullName evidence="1">Phosphoribosylaminoimidazole-succinocarboxamide synthase</fullName>
        <ecNumber evidence="1">6.3.2.6</ecNumber>
    </recommendedName>
    <alternativeName>
        <fullName evidence="1">SAICAR synthetase</fullName>
    </alternativeName>
</protein>
<dbReference type="EC" id="6.3.2.6" evidence="1"/>
<dbReference type="EMBL" id="CP000653">
    <property type="protein sequence ID" value="ABP61636.1"/>
    <property type="molecule type" value="Genomic_DNA"/>
</dbReference>
<dbReference type="RefSeq" id="WP_015959968.1">
    <property type="nucleotide sequence ID" value="NC_009436.1"/>
</dbReference>
<dbReference type="SMR" id="A4WD56"/>
<dbReference type="STRING" id="399742.Ent638_2972"/>
<dbReference type="GeneID" id="93305917"/>
<dbReference type="KEGG" id="ent:Ent638_2972"/>
<dbReference type="eggNOG" id="COG0152">
    <property type="taxonomic scope" value="Bacteria"/>
</dbReference>
<dbReference type="HOGENOM" id="CLU_061495_2_1_6"/>
<dbReference type="OrthoDB" id="9801549at2"/>
<dbReference type="UniPathway" id="UPA00074">
    <property type="reaction ID" value="UER00131"/>
</dbReference>
<dbReference type="Proteomes" id="UP000000230">
    <property type="component" value="Chromosome"/>
</dbReference>
<dbReference type="GO" id="GO:0005829">
    <property type="term" value="C:cytosol"/>
    <property type="evidence" value="ECO:0007669"/>
    <property type="project" value="TreeGrafter"/>
</dbReference>
<dbReference type="GO" id="GO:0005524">
    <property type="term" value="F:ATP binding"/>
    <property type="evidence" value="ECO:0007669"/>
    <property type="project" value="UniProtKB-KW"/>
</dbReference>
<dbReference type="GO" id="GO:0004639">
    <property type="term" value="F:phosphoribosylaminoimidazolesuccinocarboxamide synthase activity"/>
    <property type="evidence" value="ECO:0007669"/>
    <property type="project" value="UniProtKB-UniRule"/>
</dbReference>
<dbReference type="GO" id="GO:0006189">
    <property type="term" value="P:'de novo' IMP biosynthetic process"/>
    <property type="evidence" value="ECO:0007669"/>
    <property type="project" value="UniProtKB-UniRule"/>
</dbReference>
<dbReference type="GO" id="GO:0009236">
    <property type="term" value="P:cobalamin biosynthetic process"/>
    <property type="evidence" value="ECO:0007669"/>
    <property type="project" value="InterPro"/>
</dbReference>
<dbReference type="CDD" id="cd01415">
    <property type="entry name" value="SAICAR_synt_PurC"/>
    <property type="match status" value="1"/>
</dbReference>
<dbReference type="FunFam" id="3.30.200.20:FF:000086">
    <property type="entry name" value="Phosphoribosylaminoimidazole-succinocarboxamide synthase"/>
    <property type="match status" value="1"/>
</dbReference>
<dbReference type="FunFam" id="3.30.470.20:FF:000006">
    <property type="entry name" value="Phosphoribosylaminoimidazole-succinocarboxamide synthase"/>
    <property type="match status" value="1"/>
</dbReference>
<dbReference type="Gene3D" id="3.30.470.20">
    <property type="entry name" value="ATP-grasp fold, B domain"/>
    <property type="match status" value="1"/>
</dbReference>
<dbReference type="Gene3D" id="3.30.200.20">
    <property type="entry name" value="Phosphorylase Kinase, domain 1"/>
    <property type="match status" value="1"/>
</dbReference>
<dbReference type="HAMAP" id="MF_00137">
    <property type="entry name" value="SAICAR_synth"/>
    <property type="match status" value="1"/>
</dbReference>
<dbReference type="InterPro" id="IPR028923">
    <property type="entry name" value="SAICAR_synt/ADE2_N"/>
</dbReference>
<dbReference type="InterPro" id="IPR033934">
    <property type="entry name" value="SAICAR_synt_PurC"/>
</dbReference>
<dbReference type="InterPro" id="IPR001636">
    <property type="entry name" value="SAICAR_synth"/>
</dbReference>
<dbReference type="InterPro" id="IPR050089">
    <property type="entry name" value="SAICAR_synthetase"/>
</dbReference>
<dbReference type="InterPro" id="IPR018236">
    <property type="entry name" value="SAICAR_synthetase_CS"/>
</dbReference>
<dbReference type="NCBIfam" id="TIGR00081">
    <property type="entry name" value="purC"/>
    <property type="match status" value="1"/>
</dbReference>
<dbReference type="PANTHER" id="PTHR43599">
    <property type="entry name" value="MULTIFUNCTIONAL PROTEIN ADE2"/>
    <property type="match status" value="1"/>
</dbReference>
<dbReference type="PANTHER" id="PTHR43599:SF3">
    <property type="entry name" value="SI:DKEY-6E2.2"/>
    <property type="match status" value="1"/>
</dbReference>
<dbReference type="Pfam" id="PF01259">
    <property type="entry name" value="SAICAR_synt"/>
    <property type="match status" value="1"/>
</dbReference>
<dbReference type="SUPFAM" id="SSF56104">
    <property type="entry name" value="SAICAR synthase-like"/>
    <property type="match status" value="1"/>
</dbReference>
<dbReference type="PROSITE" id="PS01057">
    <property type="entry name" value="SAICAR_SYNTHETASE_1"/>
    <property type="match status" value="1"/>
</dbReference>
<dbReference type="PROSITE" id="PS01058">
    <property type="entry name" value="SAICAR_SYNTHETASE_2"/>
    <property type="match status" value="1"/>
</dbReference>
<keyword id="KW-0067">ATP-binding</keyword>
<keyword id="KW-0436">Ligase</keyword>
<keyword id="KW-0547">Nucleotide-binding</keyword>
<keyword id="KW-0658">Purine biosynthesis</keyword>
<organism>
    <name type="scientific">Enterobacter sp. (strain 638)</name>
    <dbReference type="NCBI Taxonomy" id="399742"/>
    <lineage>
        <taxon>Bacteria</taxon>
        <taxon>Pseudomonadati</taxon>
        <taxon>Pseudomonadota</taxon>
        <taxon>Gammaproteobacteria</taxon>
        <taxon>Enterobacterales</taxon>
        <taxon>Enterobacteriaceae</taxon>
        <taxon>Enterobacter</taxon>
    </lineage>
</organism>
<sequence>MQKQAELYRGKAKTVYSTENPDLLVLEFRNDTSAGDGARIEQFDRKGMVNNKFNHFIMSKLADAGIPTQMEALLSDTECLVKKLDMVPVECVVRNRAAGSLVKRLGIEEGIELNPPLFDLFLKNDEMHDPMVNESYCETFGWVSKENLARMQELTFKANDVLKKLFDDAGLILVDFKLEFGLYKGEVVLGDEFSPDGSRLWDKETLDKMDKDRFRQSLGGLIEAYEAVAHRLGVKLD</sequence>
<proteinExistence type="inferred from homology"/>